<comment type="function">
    <text evidence="1">Converts 2-succinyl-6-hydroxy-2,4-cyclohexadiene-1-carboxylate (SHCHC) to 2-succinylbenzoate (OSB).</text>
</comment>
<comment type="catalytic activity">
    <reaction evidence="1">
        <text>(1R,6R)-6-hydroxy-2-succinyl-cyclohexa-2,4-diene-1-carboxylate = 2-succinylbenzoate + H2O</text>
        <dbReference type="Rhea" id="RHEA:10196"/>
        <dbReference type="ChEBI" id="CHEBI:15377"/>
        <dbReference type="ChEBI" id="CHEBI:18325"/>
        <dbReference type="ChEBI" id="CHEBI:58689"/>
        <dbReference type="EC" id="4.2.1.113"/>
    </reaction>
</comment>
<comment type="cofactor">
    <cofactor evidence="1">
        <name>a divalent metal cation</name>
        <dbReference type="ChEBI" id="CHEBI:60240"/>
    </cofactor>
</comment>
<comment type="pathway">
    <text evidence="1">Quinol/quinone metabolism; 1,4-dihydroxy-2-naphthoate biosynthesis; 1,4-dihydroxy-2-naphthoate from chorismate: step 4/7.</text>
</comment>
<comment type="pathway">
    <text evidence="1">Quinol/quinone metabolism; menaquinone biosynthesis.</text>
</comment>
<comment type="similarity">
    <text evidence="1">Belongs to the mandelate racemase/muconate lactonizing enzyme family. MenC type 1 subfamily.</text>
</comment>
<proteinExistence type="inferred from homology"/>
<name>MENC_YERPY</name>
<protein>
    <recommendedName>
        <fullName evidence="1">o-succinylbenzoate synthase</fullName>
        <shortName evidence="1">OSB synthase</shortName>
        <shortName evidence="1">OSBS</shortName>
        <ecNumber evidence="1">4.2.1.113</ecNumber>
    </recommendedName>
    <alternativeName>
        <fullName evidence="1">4-(2'-carboxyphenyl)-4-oxybutyric acid synthase</fullName>
    </alternativeName>
    <alternativeName>
        <fullName evidence="1">o-succinylbenzoic acid synthase</fullName>
    </alternativeName>
</protein>
<organism>
    <name type="scientific">Yersinia pseudotuberculosis serotype O:3 (strain YPIII)</name>
    <dbReference type="NCBI Taxonomy" id="502800"/>
    <lineage>
        <taxon>Bacteria</taxon>
        <taxon>Pseudomonadati</taxon>
        <taxon>Pseudomonadota</taxon>
        <taxon>Gammaproteobacteria</taxon>
        <taxon>Enterobacterales</taxon>
        <taxon>Yersiniaceae</taxon>
        <taxon>Yersinia</taxon>
    </lineage>
</organism>
<sequence length="323" mass="35298">MRTATLYRYSVPMEAGVILRHQRLKSRDGLLVKLQQGELSGWGEIAPLPEFSQETLDQAQVAAECWLQHWVSGVESDDSVLPSVAFGLSCAQAELKQTLPLSADYRKAPLCTGDPDELFAVLQALPGEKVAKVKVGLYEAVRDGMIVNVLLEALPDLTLRLDANRSWSRAKADGFAKYVNPALRSRIAFLEEPCKTRAESREFARDTGIAIAWDESVREADFQVEAEPGVAAIVIKPTLVGSLARCQQLVQQAHQAGLVAVISSSIESSLGLTQLARLAAWLTPATVPGLDTLDLMQAQVVRPWPDSPLPLITTEQLGVVWHR</sequence>
<feature type="chain" id="PRO_1000125590" description="o-succinylbenzoate synthase">
    <location>
        <begin position="1"/>
        <end position="323"/>
    </location>
</feature>
<feature type="active site" description="Proton donor" evidence="1">
    <location>
        <position position="134"/>
    </location>
</feature>
<feature type="active site" description="Proton acceptor" evidence="1">
    <location>
        <position position="236"/>
    </location>
</feature>
<feature type="binding site" evidence="1">
    <location>
        <position position="162"/>
    </location>
    <ligand>
        <name>Mg(2+)</name>
        <dbReference type="ChEBI" id="CHEBI:18420"/>
    </ligand>
</feature>
<feature type="binding site" evidence="1">
    <location>
        <position position="191"/>
    </location>
    <ligand>
        <name>Mg(2+)</name>
        <dbReference type="ChEBI" id="CHEBI:18420"/>
    </ligand>
</feature>
<feature type="binding site" evidence="1">
    <location>
        <position position="214"/>
    </location>
    <ligand>
        <name>Mg(2+)</name>
        <dbReference type="ChEBI" id="CHEBI:18420"/>
    </ligand>
</feature>
<accession>B1JH91</accession>
<dbReference type="EC" id="4.2.1.113" evidence="1"/>
<dbReference type="EMBL" id="CP000950">
    <property type="protein sequence ID" value="ACA67885.1"/>
    <property type="molecule type" value="Genomic_DNA"/>
</dbReference>
<dbReference type="RefSeq" id="WP_012303942.1">
    <property type="nucleotide sequence ID" value="NZ_CP009792.1"/>
</dbReference>
<dbReference type="SMR" id="B1JH91"/>
<dbReference type="KEGG" id="ypy:YPK_1592"/>
<dbReference type="PATRIC" id="fig|502800.11.peg.2239"/>
<dbReference type="UniPathway" id="UPA00079"/>
<dbReference type="UniPathway" id="UPA01057">
    <property type="reaction ID" value="UER00165"/>
</dbReference>
<dbReference type="GO" id="GO:0000287">
    <property type="term" value="F:magnesium ion binding"/>
    <property type="evidence" value="ECO:0007669"/>
    <property type="project" value="UniProtKB-UniRule"/>
</dbReference>
<dbReference type="GO" id="GO:0043748">
    <property type="term" value="F:O-succinylbenzoate synthase activity"/>
    <property type="evidence" value="ECO:0007669"/>
    <property type="project" value="UniProtKB-EC"/>
</dbReference>
<dbReference type="GO" id="GO:0009234">
    <property type="term" value="P:menaquinone biosynthetic process"/>
    <property type="evidence" value="ECO:0007669"/>
    <property type="project" value="UniProtKB-UniRule"/>
</dbReference>
<dbReference type="CDD" id="cd03320">
    <property type="entry name" value="OSBS"/>
    <property type="match status" value="1"/>
</dbReference>
<dbReference type="Gene3D" id="3.20.20.120">
    <property type="entry name" value="Enolase-like C-terminal domain"/>
    <property type="match status" value="1"/>
</dbReference>
<dbReference type="Gene3D" id="3.30.390.10">
    <property type="entry name" value="Enolase-like, N-terminal domain"/>
    <property type="match status" value="1"/>
</dbReference>
<dbReference type="HAMAP" id="MF_00470">
    <property type="entry name" value="MenC_1"/>
    <property type="match status" value="1"/>
</dbReference>
<dbReference type="InterPro" id="IPR036849">
    <property type="entry name" value="Enolase-like_C_sf"/>
</dbReference>
<dbReference type="InterPro" id="IPR029017">
    <property type="entry name" value="Enolase-like_N"/>
</dbReference>
<dbReference type="InterPro" id="IPR029065">
    <property type="entry name" value="Enolase_C-like"/>
</dbReference>
<dbReference type="InterPro" id="IPR013342">
    <property type="entry name" value="Mandelate_racemase_C"/>
</dbReference>
<dbReference type="InterPro" id="IPR010196">
    <property type="entry name" value="OSB_synthase_MenC1"/>
</dbReference>
<dbReference type="InterPro" id="IPR041338">
    <property type="entry name" value="OSBS_N"/>
</dbReference>
<dbReference type="NCBIfam" id="TIGR01927">
    <property type="entry name" value="menC_gam_Gplu"/>
    <property type="match status" value="1"/>
</dbReference>
<dbReference type="NCBIfam" id="NF003473">
    <property type="entry name" value="PRK05105.1"/>
    <property type="match status" value="1"/>
</dbReference>
<dbReference type="PANTHER" id="PTHR48073:SF2">
    <property type="entry name" value="O-SUCCINYLBENZOATE SYNTHASE"/>
    <property type="match status" value="1"/>
</dbReference>
<dbReference type="PANTHER" id="PTHR48073">
    <property type="entry name" value="O-SUCCINYLBENZOATE SYNTHASE-RELATED"/>
    <property type="match status" value="1"/>
</dbReference>
<dbReference type="Pfam" id="PF21508">
    <property type="entry name" value="MenC_N"/>
    <property type="match status" value="1"/>
</dbReference>
<dbReference type="Pfam" id="PF13378">
    <property type="entry name" value="MR_MLE_C"/>
    <property type="match status" value="1"/>
</dbReference>
<dbReference type="SFLD" id="SFLDG00180">
    <property type="entry name" value="muconate_cycloisomerase"/>
    <property type="match status" value="1"/>
</dbReference>
<dbReference type="SFLD" id="SFLDF00009">
    <property type="entry name" value="o-succinylbenzoate_synthase"/>
    <property type="match status" value="1"/>
</dbReference>
<dbReference type="SMART" id="SM00922">
    <property type="entry name" value="MR_MLE"/>
    <property type="match status" value="1"/>
</dbReference>
<dbReference type="SUPFAM" id="SSF51604">
    <property type="entry name" value="Enolase C-terminal domain-like"/>
    <property type="match status" value="1"/>
</dbReference>
<dbReference type="SUPFAM" id="SSF54826">
    <property type="entry name" value="Enolase N-terminal domain-like"/>
    <property type="match status" value="1"/>
</dbReference>
<gene>
    <name evidence="1" type="primary">menC</name>
    <name type="ordered locus">YPK_1592</name>
</gene>
<keyword id="KW-0456">Lyase</keyword>
<keyword id="KW-0460">Magnesium</keyword>
<keyword id="KW-0474">Menaquinone biosynthesis</keyword>
<keyword id="KW-0479">Metal-binding</keyword>
<reference key="1">
    <citation type="submission" date="2008-02" db="EMBL/GenBank/DDBJ databases">
        <title>Complete sequence of Yersinia pseudotuberculosis YPIII.</title>
        <authorList>
            <consortium name="US DOE Joint Genome Institute"/>
            <person name="Copeland A."/>
            <person name="Lucas S."/>
            <person name="Lapidus A."/>
            <person name="Glavina del Rio T."/>
            <person name="Dalin E."/>
            <person name="Tice H."/>
            <person name="Bruce D."/>
            <person name="Goodwin L."/>
            <person name="Pitluck S."/>
            <person name="Munk A.C."/>
            <person name="Brettin T."/>
            <person name="Detter J.C."/>
            <person name="Han C."/>
            <person name="Tapia R."/>
            <person name="Schmutz J."/>
            <person name="Larimer F."/>
            <person name="Land M."/>
            <person name="Hauser L."/>
            <person name="Challacombe J.F."/>
            <person name="Green L."/>
            <person name="Lindler L.E."/>
            <person name="Nikolich M.P."/>
            <person name="Richardson P."/>
        </authorList>
    </citation>
    <scope>NUCLEOTIDE SEQUENCE [LARGE SCALE GENOMIC DNA]</scope>
    <source>
        <strain>YPIII</strain>
    </source>
</reference>
<evidence type="ECO:0000255" key="1">
    <source>
        <dbReference type="HAMAP-Rule" id="MF_00470"/>
    </source>
</evidence>